<protein>
    <recommendedName>
        <fullName evidence="1">ATP synthase subunit a</fullName>
    </recommendedName>
    <alternativeName>
        <fullName evidence="1">ATP synthase F0 sector subunit a</fullName>
    </alternativeName>
    <alternativeName>
        <fullName evidence="1">F-ATPase subunit 6</fullName>
    </alternativeName>
</protein>
<comment type="function">
    <text evidence="1">Key component of the proton channel; it plays a direct role in the translocation of protons across the membrane.</text>
</comment>
<comment type="subunit">
    <text evidence="1">F-type ATPases have 2 components, CF(1) - the catalytic core - and CF(0) - the membrane proton channel. CF(1) has five subunits: alpha(3), beta(3), gamma(1), delta(1), epsilon(1). CF(0) has three main subunits: a(1), b(2) and c(9-12). The alpha and beta chains form an alternating ring which encloses part of the gamma chain. CF(1) is attached to CF(0) by a central stalk formed by the gamma and epsilon chains, while a peripheral stalk is formed by the delta and b chains.</text>
</comment>
<comment type="subcellular location">
    <subcellularLocation>
        <location evidence="1">Cell inner membrane</location>
        <topology evidence="1">Multi-pass membrane protein</topology>
    </subcellularLocation>
</comment>
<comment type="similarity">
    <text evidence="1">Belongs to the ATPase A chain family.</text>
</comment>
<dbReference type="EMBL" id="CP001103">
    <property type="protein sequence ID" value="AEB00220.1"/>
    <property type="molecule type" value="Genomic_DNA"/>
</dbReference>
<dbReference type="RefSeq" id="WP_012520223.1">
    <property type="nucleotide sequence ID" value="NC_011138.3"/>
</dbReference>
<dbReference type="SMR" id="B4RS87"/>
<dbReference type="GeneID" id="56344292"/>
<dbReference type="KEGG" id="amc:MADE_1020485"/>
<dbReference type="HOGENOM" id="CLU_041018_1_0_6"/>
<dbReference type="Proteomes" id="UP000001870">
    <property type="component" value="Chromosome"/>
</dbReference>
<dbReference type="GO" id="GO:0005886">
    <property type="term" value="C:plasma membrane"/>
    <property type="evidence" value="ECO:0007669"/>
    <property type="project" value="UniProtKB-SubCell"/>
</dbReference>
<dbReference type="GO" id="GO:0045259">
    <property type="term" value="C:proton-transporting ATP synthase complex"/>
    <property type="evidence" value="ECO:0007669"/>
    <property type="project" value="UniProtKB-KW"/>
</dbReference>
<dbReference type="GO" id="GO:0046933">
    <property type="term" value="F:proton-transporting ATP synthase activity, rotational mechanism"/>
    <property type="evidence" value="ECO:0007669"/>
    <property type="project" value="UniProtKB-UniRule"/>
</dbReference>
<dbReference type="GO" id="GO:0042777">
    <property type="term" value="P:proton motive force-driven plasma membrane ATP synthesis"/>
    <property type="evidence" value="ECO:0007669"/>
    <property type="project" value="TreeGrafter"/>
</dbReference>
<dbReference type="CDD" id="cd00310">
    <property type="entry name" value="ATP-synt_Fo_a_6"/>
    <property type="match status" value="1"/>
</dbReference>
<dbReference type="FunFam" id="1.20.120.220:FF:000002">
    <property type="entry name" value="ATP synthase subunit a"/>
    <property type="match status" value="1"/>
</dbReference>
<dbReference type="Gene3D" id="1.20.120.220">
    <property type="entry name" value="ATP synthase, F0 complex, subunit A"/>
    <property type="match status" value="1"/>
</dbReference>
<dbReference type="HAMAP" id="MF_01393">
    <property type="entry name" value="ATP_synth_a_bact"/>
    <property type="match status" value="1"/>
</dbReference>
<dbReference type="InterPro" id="IPR045082">
    <property type="entry name" value="ATP_syn_F0_a_bact/chloroplast"/>
</dbReference>
<dbReference type="InterPro" id="IPR000568">
    <property type="entry name" value="ATP_synth_F0_asu"/>
</dbReference>
<dbReference type="InterPro" id="IPR023011">
    <property type="entry name" value="ATP_synth_F0_asu_AS"/>
</dbReference>
<dbReference type="InterPro" id="IPR035908">
    <property type="entry name" value="F0_ATP_A_sf"/>
</dbReference>
<dbReference type="NCBIfam" id="TIGR01131">
    <property type="entry name" value="ATP_synt_6_or_A"/>
    <property type="match status" value="1"/>
</dbReference>
<dbReference type="NCBIfam" id="NF004477">
    <property type="entry name" value="PRK05815.1-1"/>
    <property type="match status" value="1"/>
</dbReference>
<dbReference type="PANTHER" id="PTHR42823">
    <property type="entry name" value="ATP SYNTHASE SUBUNIT A, CHLOROPLASTIC"/>
    <property type="match status" value="1"/>
</dbReference>
<dbReference type="PANTHER" id="PTHR42823:SF3">
    <property type="entry name" value="ATP SYNTHASE SUBUNIT A, CHLOROPLASTIC"/>
    <property type="match status" value="1"/>
</dbReference>
<dbReference type="Pfam" id="PF00119">
    <property type="entry name" value="ATP-synt_A"/>
    <property type="match status" value="1"/>
</dbReference>
<dbReference type="SUPFAM" id="SSF81336">
    <property type="entry name" value="F1F0 ATP synthase subunit A"/>
    <property type="match status" value="1"/>
</dbReference>
<dbReference type="PROSITE" id="PS00449">
    <property type="entry name" value="ATPASE_A"/>
    <property type="match status" value="1"/>
</dbReference>
<reference key="1">
    <citation type="journal article" date="2008" name="ISME J.">
        <title>Comparative genomics of two ecotypes of the marine planktonic copiotroph Alteromonas macleodii suggests alternative lifestyles associated with different kinds of particulate organic matter.</title>
        <authorList>
            <person name="Ivars-Martinez E."/>
            <person name="Martin-Cuadrado A.-B."/>
            <person name="D'Auria G."/>
            <person name="Mira A."/>
            <person name="Ferriera S."/>
            <person name="Johnson J."/>
            <person name="Friedman R."/>
            <person name="Rodriguez-Valera F."/>
        </authorList>
    </citation>
    <scope>NUCLEOTIDE SEQUENCE [LARGE SCALE GENOMIC DNA]</scope>
    <source>
        <strain>DSM 17117 / CIP 110805 / LMG 28347 / Deep ecotype</strain>
    </source>
</reference>
<keyword id="KW-0066">ATP synthesis</keyword>
<keyword id="KW-0997">Cell inner membrane</keyword>
<keyword id="KW-1003">Cell membrane</keyword>
<keyword id="KW-0138">CF(0)</keyword>
<keyword id="KW-0375">Hydrogen ion transport</keyword>
<keyword id="KW-0406">Ion transport</keyword>
<keyword id="KW-0472">Membrane</keyword>
<keyword id="KW-0812">Transmembrane</keyword>
<keyword id="KW-1133">Transmembrane helix</keyword>
<keyword id="KW-0813">Transport</keyword>
<gene>
    <name evidence="1" type="primary">atpB</name>
    <name type="ordered locus">MADE_1020485</name>
</gene>
<accession>B4RS87</accession>
<accession>F2GCN3</accession>
<name>ATP6_ALTMD</name>
<feature type="chain" id="PRO_0000362231" description="ATP synthase subunit a">
    <location>
        <begin position="1"/>
        <end position="277"/>
    </location>
</feature>
<feature type="transmembrane region" description="Helical" evidence="1">
    <location>
        <begin position="40"/>
        <end position="60"/>
    </location>
</feature>
<feature type="transmembrane region" description="Helical" evidence="1">
    <location>
        <begin position="98"/>
        <end position="118"/>
    </location>
</feature>
<feature type="transmembrane region" description="Helical" evidence="1">
    <location>
        <begin position="154"/>
        <end position="174"/>
    </location>
</feature>
<feature type="transmembrane region" description="Helical" evidence="1">
    <location>
        <begin position="219"/>
        <end position="239"/>
    </location>
</feature>
<feature type="transmembrane region" description="Helical" evidence="1">
    <location>
        <begin position="245"/>
        <end position="265"/>
    </location>
</feature>
<organism>
    <name type="scientific">Alteromonas mediterranea (strain DSM 17117 / CIP 110805 / LMG 28347 / Deep ecotype)</name>
    <dbReference type="NCBI Taxonomy" id="1774373"/>
    <lineage>
        <taxon>Bacteria</taxon>
        <taxon>Pseudomonadati</taxon>
        <taxon>Pseudomonadota</taxon>
        <taxon>Gammaproteobacteria</taxon>
        <taxon>Alteromonadales</taxon>
        <taxon>Alteromonadaceae</taxon>
        <taxon>Alteromonas/Salinimonas group</taxon>
        <taxon>Alteromonas</taxon>
    </lineage>
</organism>
<evidence type="ECO:0000255" key="1">
    <source>
        <dbReference type="HAMAP-Rule" id="MF_01393"/>
    </source>
</evidence>
<proteinExistence type="inferred from homology"/>
<sequence length="277" mass="30686">MASEYTTSEYIKHHLTNATMCSTDNGIAFNKACSDAGFWAWHVDTLAWSIGLGLLFLIIFRSVASKATTGVPGKMQAFVELVVEFVDDNVKSTFHGKSALIAPLALTIFVWVLLMNLMDLVPVDLIPWVSGLIGQAAFGMDPHDVYNKAVPTTDLNLTFALASGVFILILFYSIKMKGIGGFAKELTMQPFGHPIFIPVNFILETVTLLARPLSLALRLFGNLYASELIFILIATIGYFQLPLHFMWAVFHILVLPLQAFIFMMLTIVYLSLACEDH</sequence>